<name>GLGB_RHORT</name>
<dbReference type="EC" id="2.4.1.18" evidence="1"/>
<dbReference type="EMBL" id="CP000230">
    <property type="protein sequence ID" value="ABC23373.1"/>
    <property type="molecule type" value="Genomic_DNA"/>
</dbReference>
<dbReference type="RefSeq" id="WP_011390326.1">
    <property type="nucleotide sequence ID" value="NC_007643.1"/>
</dbReference>
<dbReference type="RefSeq" id="YP_427660.1">
    <property type="nucleotide sequence ID" value="NC_007643.1"/>
</dbReference>
<dbReference type="SMR" id="Q2RR72"/>
<dbReference type="STRING" id="269796.Rru_A2576"/>
<dbReference type="CAZy" id="CBM48">
    <property type="family name" value="Carbohydrate-Binding Module Family 48"/>
</dbReference>
<dbReference type="CAZy" id="GH13">
    <property type="family name" value="Glycoside Hydrolase Family 13"/>
</dbReference>
<dbReference type="EnsemblBacteria" id="ABC23373">
    <property type="protein sequence ID" value="ABC23373"/>
    <property type="gene ID" value="Rru_A2576"/>
</dbReference>
<dbReference type="KEGG" id="rru:Rru_A2576"/>
<dbReference type="PATRIC" id="fig|269796.9.peg.2685"/>
<dbReference type="eggNOG" id="COG0296">
    <property type="taxonomic scope" value="Bacteria"/>
</dbReference>
<dbReference type="HOGENOM" id="CLU_004245_3_2_5"/>
<dbReference type="PhylomeDB" id="Q2RR72"/>
<dbReference type="UniPathway" id="UPA00164"/>
<dbReference type="Proteomes" id="UP000001929">
    <property type="component" value="Chromosome"/>
</dbReference>
<dbReference type="GO" id="GO:0005829">
    <property type="term" value="C:cytosol"/>
    <property type="evidence" value="ECO:0007669"/>
    <property type="project" value="TreeGrafter"/>
</dbReference>
<dbReference type="GO" id="GO:0003844">
    <property type="term" value="F:1,4-alpha-glucan branching enzyme activity"/>
    <property type="evidence" value="ECO:0007669"/>
    <property type="project" value="UniProtKB-UniRule"/>
</dbReference>
<dbReference type="GO" id="GO:0043169">
    <property type="term" value="F:cation binding"/>
    <property type="evidence" value="ECO:0007669"/>
    <property type="project" value="InterPro"/>
</dbReference>
<dbReference type="GO" id="GO:0004553">
    <property type="term" value="F:hydrolase activity, hydrolyzing O-glycosyl compounds"/>
    <property type="evidence" value="ECO:0007669"/>
    <property type="project" value="InterPro"/>
</dbReference>
<dbReference type="GO" id="GO:0005978">
    <property type="term" value="P:glycogen biosynthetic process"/>
    <property type="evidence" value="ECO:0007669"/>
    <property type="project" value="UniProtKB-UniRule"/>
</dbReference>
<dbReference type="CDD" id="cd11322">
    <property type="entry name" value="AmyAc_Glg_BE"/>
    <property type="match status" value="1"/>
</dbReference>
<dbReference type="CDD" id="cd02855">
    <property type="entry name" value="E_set_GBE_prok_N"/>
    <property type="match status" value="1"/>
</dbReference>
<dbReference type="FunFam" id="2.60.40.10:FF:000169">
    <property type="entry name" value="1,4-alpha-glucan branching enzyme GlgB"/>
    <property type="match status" value="1"/>
</dbReference>
<dbReference type="FunFam" id="2.60.40.1180:FF:000002">
    <property type="entry name" value="1,4-alpha-glucan branching enzyme GlgB"/>
    <property type="match status" value="1"/>
</dbReference>
<dbReference type="FunFam" id="3.20.20.80:FF:000003">
    <property type="entry name" value="1,4-alpha-glucan branching enzyme GlgB"/>
    <property type="match status" value="1"/>
</dbReference>
<dbReference type="Gene3D" id="3.20.20.80">
    <property type="entry name" value="Glycosidases"/>
    <property type="match status" value="1"/>
</dbReference>
<dbReference type="Gene3D" id="2.60.40.1180">
    <property type="entry name" value="Golgi alpha-mannosidase II"/>
    <property type="match status" value="1"/>
</dbReference>
<dbReference type="Gene3D" id="2.60.40.10">
    <property type="entry name" value="Immunoglobulins"/>
    <property type="match status" value="2"/>
</dbReference>
<dbReference type="HAMAP" id="MF_00685">
    <property type="entry name" value="GlgB"/>
    <property type="match status" value="1"/>
</dbReference>
<dbReference type="InterPro" id="IPR006048">
    <property type="entry name" value="A-amylase/branching_C"/>
</dbReference>
<dbReference type="InterPro" id="IPR037439">
    <property type="entry name" value="Branching_enzy"/>
</dbReference>
<dbReference type="InterPro" id="IPR006407">
    <property type="entry name" value="GlgB"/>
</dbReference>
<dbReference type="InterPro" id="IPR054169">
    <property type="entry name" value="GlgB_N"/>
</dbReference>
<dbReference type="InterPro" id="IPR044143">
    <property type="entry name" value="GlgB_N_E_set_prok"/>
</dbReference>
<dbReference type="InterPro" id="IPR006047">
    <property type="entry name" value="Glyco_hydro_13_cat_dom"/>
</dbReference>
<dbReference type="InterPro" id="IPR004193">
    <property type="entry name" value="Glyco_hydro_13_N"/>
</dbReference>
<dbReference type="InterPro" id="IPR013780">
    <property type="entry name" value="Glyco_hydro_b"/>
</dbReference>
<dbReference type="InterPro" id="IPR017853">
    <property type="entry name" value="Glycoside_hydrolase_SF"/>
</dbReference>
<dbReference type="InterPro" id="IPR013783">
    <property type="entry name" value="Ig-like_fold"/>
</dbReference>
<dbReference type="InterPro" id="IPR014756">
    <property type="entry name" value="Ig_E-set"/>
</dbReference>
<dbReference type="NCBIfam" id="TIGR01515">
    <property type="entry name" value="branching_enzym"/>
    <property type="match status" value="1"/>
</dbReference>
<dbReference type="NCBIfam" id="NF003811">
    <property type="entry name" value="PRK05402.1"/>
    <property type="match status" value="1"/>
</dbReference>
<dbReference type="NCBIfam" id="NF008967">
    <property type="entry name" value="PRK12313.1"/>
    <property type="match status" value="1"/>
</dbReference>
<dbReference type="PANTHER" id="PTHR43651">
    <property type="entry name" value="1,4-ALPHA-GLUCAN-BRANCHING ENZYME"/>
    <property type="match status" value="1"/>
</dbReference>
<dbReference type="PANTHER" id="PTHR43651:SF3">
    <property type="entry name" value="1,4-ALPHA-GLUCAN-BRANCHING ENZYME"/>
    <property type="match status" value="1"/>
</dbReference>
<dbReference type="Pfam" id="PF00128">
    <property type="entry name" value="Alpha-amylase"/>
    <property type="match status" value="1"/>
</dbReference>
<dbReference type="Pfam" id="PF02806">
    <property type="entry name" value="Alpha-amylase_C"/>
    <property type="match status" value="1"/>
</dbReference>
<dbReference type="Pfam" id="PF02922">
    <property type="entry name" value="CBM_48"/>
    <property type="match status" value="1"/>
</dbReference>
<dbReference type="Pfam" id="PF22019">
    <property type="entry name" value="GlgB_N"/>
    <property type="match status" value="1"/>
</dbReference>
<dbReference type="PIRSF" id="PIRSF000463">
    <property type="entry name" value="GlgB"/>
    <property type="match status" value="1"/>
</dbReference>
<dbReference type="SMART" id="SM00642">
    <property type="entry name" value="Aamy"/>
    <property type="match status" value="1"/>
</dbReference>
<dbReference type="SUPFAM" id="SSF51445">
    <property type="entry name" value="(Trans)glycosidases"/>
    <property type="match status" value="1"/>
</dbReference>
<dbReference type="SUPFAM" id="SSF81296">
    <property type="entry name" value="E set domains"/>
    <property type="match status" value="2"/>
</dbReference>
<dbReference type="SUPFAM" id="SSF51011">
    <property type="entry name" value="Glycosyl hydrolase domain"/>
    <property type="match status" value="1"/>
</dbReference>
<reference key="1">
    <citation type="journal article" date="2011" name="Stand. Genomic Sci.">
        <title>Complete genome sequence of Rhodospirillum rubrum type strain (S1).</title>
        <authorList>
            <person name="Munk A.C."/>
            <person name="Copeland A."/>
            <person name="Lucas S."/>
            <person name="Lapidus A."/>
            <person name="Del Rio T.G."/>
            <person name="Barry K."/>
            <person name="Detter J.C."/>
            <person name="Hammon N."/>
            <person name="Israni S."/>
            <person name="Pitluck S."/>
            <person name="Brettin T."/>
            <person name="Bruce D."/>
            <person name="Han C."/>
            <person name="Tapia R."/>
            <person name="Gilna P."/>
            <person name="Schmutz J."/>
            <person name="Larimer F."/>
            <person name="Land M."/>
            <person name="Kyrpides N.C."/>
            <person name="Mavromatis K."/>
            <person name="Richardson P."/>
            <person name="Rohde M."/>
            <person name="Goeker M."/>
            <person name="Klenk H.P."/>
            <person name="Zhang Y."/>
            <person name="Roberts G.P."/>
            <person name="Reslewic S."/>
            <person name="Schwartz D.C."/>
        </authorList>
    </citation>
    <scope>NUCLEOTIDE SEQUENCE [LARGE SCALE GENOMIC DNA]</scope>
    <source>
        <strain>ATCC 11170 / ATH 1.1.1 / DSM 467 / LMG 4362 / NCIMB 8255 / S1</strain>
    </source>
</reference>
<feature type="chain" id="PRO_0000260692" description="1,4-alpha-glucan branching enzyme GlgB">
    <location>
        <begin position="1"/>
        <end position="740"/>
    </location>
</feature>
<feature type="active site" description="Nucleophile" evidence="1">
    <location>
        <position position="414"/>
    </location>
</feature>
<feature type="active site" description="Proton donor" evidence="1">
    <location>
        <position position="467"/>
    </location>
</feature>
<organism>
    <name type="scientific">Rhodospirillum rubrum (strain ATCC 11170 / ATH 1.1.1 / DSM 467 / LMG 4362 / NCIMB 8255 / S1)</name>
    <dbReference type="NCBI Taxonomy" id="269796"/>
    <lineage>
        <taxon>Bacteria</taxon>
        <taxon>Pseudomonadati</taxon>
        <taxon>Pseudomonadota</taxon>
        <taxon>Alphaproteobacteria</taxon>
        <taxon>Rhodospirillales</taxon>
        <taxon>Rhodospirillaceae</taxon>
        <taxon>Rhodospirillum</taxon>
    </lineage>
</organism>
<protein>
    <recommendedName>
        <fullName evidence="1">1,4-alpha-glucan branching enzyme GlgB</fullName>
        <ecNumber evidence="1">2.4.1.18</ecNumber>
    </recommendedName>
    <alternativeName>
        <fullName evidence="1">1,4-alpha-D-glucan:1,4-alpha-D-glucan 6-glucosyl-transferase</fullName>
    </alternativeName>
    <alternativeName>
        <fullName evidence="1">Alpha-(1-&gt;4)-glucan branching enzyme</fullName>
    </alternativeName>
    <alternativeName>
        <fullName evidence="1">Glycogen branching enzyme</fullName>
        <shortName evidence="1">BE</shortName>
    </alternativeName>
</protein>
<comment type="function">
    <text evidence="1">Catalyzes the formation of the alpha-1,6-glucosidic linkages in glycogen by scission of a 1,4-alpha-linked oligosaccharide from growing alpha-1,4-glucan chains and the subsequent attachment of the oligosaccharide to the alpha-1,6 position.</text>
</comment>
<comment type="catalytic activity">
    <reaction evidence="1">
        <text>Transfers a segment of a (1-&gt;4)-alpha-D-glucan chain to a primary hydroxy group in a similar glucan chain.</text>
        <dbReference type="EC" id="2.4.1.18"/>
    </reaction>
</comment>
<comment type="pathway">
    <text evidence="1">Glycan biosynthesis; glycogen biosynthesis.</text>
</comment>
<comment type="subunit">
    <text evidence="1">Monomer.</text>
</comment>
<comment type="similarity">
    <text evidence="1">Belongs to the glycosyl hydrolase 13 family. GlgB subfamily.</text>
</comment>
<evidence type="ECO:0000255" key="1">
    <source>
        <dbReference type="HAMAP-Rule" id="MF_00685"/>
    </source>
</evidence>
<keyword id="KW-0119">Carbohydrate metabolism</keyword>
<keyword id="KW-0320">Glycogen biosynthesis</keyword>
<keyword id="KW-0321">Glycogen metabolism</keyword>
<keyword id="KW-0328">Glycosyltransferase</keyword>
<keyword id="KW-1185">Reference proteome</keyword>
<keyword id="KW-0808">Transferase</keyword>
<sequence length="740" mass="83075">MDPKAYSEAVAALVGARHSNPFAFLGPHEGRAEGGRGGFCIRCFRPKATAVSLISAADDTVLGRMKRLHPDGLFGIDLPEAPGALAYRLRVSEGDEDRDIEDPYRFGPVLGELDRHLLGEGTHLDIYRKMGAHPMTRDGVRGTGFALWAPNATRVSVIGDFNGWDGRLHPMRAHPGSGVWDIFLPGVVEGHLYKYELLGPDGSLLPAKADPYAFQAEKPPHTASVVRGLGTYAWNDGRWMSERADRVATSAPVSIYEVHLGSWRHGGGDRSLSYREMAEQLIPYVKEMGFTHIELLPVSEFPFDGSWGYQPIGLFAPTSRFGEPDDFRHFVDRCHQEGVGVILDWVAGHFPEDAHGLSWFDGTHLYEHSDPRQGRHMDWGTYIFNYGRNEVRNFLLANALFWLEQFHIDGLRVDAVASMLYLDYSRKAGEWVPNKFGGRENLEAIDFLRRMNELVYGRFPGAVTIAEESTAWPMVSRPVHLGGLGFGYKWNMGWMNDTLSYMSQDPIYRRFHQHDLSFGLLYAFTENFVLPLSHDEVVHGKRSILGRMPGDAWQQFANLRAYYGFMWTHPGKKLLFMGCEFAQGREWNHNASLDWHLLDIDWHKGVQALVRDLNGLYAGVPALHDRDTEGYGFSWIDCTDADQSVLAFLRFGETAEDVVMVVCNFTPNPRHGYRLGAPIAGRWREIFNTDSAHYGGSNMGNSVVETEETKSHGHAQSVVLTLPPLATIVLRPDGPITRIA</sequence>
<proteinExistence type="inferred from homology"/>
<gene>
    <name evidence="1" type="primary">glgB</name>
    <name type="ordered locus">Rru_A2576</name>
</gene>
<accession>Q2RR72</accession>